<comment type="subcellular location">
    <subcellularLocation>
        <location evidence="1">Cytoplasm</location>
    </subcellularLocation>
</comment>
<sequence>MDIPLDAAEIRPEPPNSLDLNGSSTRKIKLTAPNINLSLDHSEGSILSDDNLDTPDELDINVDDLDTPDEADSFDYTGQDDQPALGEAVQEDFESIQEYTAEEERADNRLWRTVVIGEQEQRIDMKVIEPYKKVISHGGYYGEGVNAIIVFAACFLPDSSRPDYNYVMENLFLYVISTLELMVAEDYMVVYLNGATPRRKMPGLGWMKKCYQMIDRRLRKNLKSFIIVHPSWFIRTILALTRPFISSKFSSKIKYVSTLAELSELIPMEYVHIPETIVKLDEELRESESPKAGCLPNEPEMNTLEEEFENKMGDND</sequence>
<organism>
    <name type="scientific">Xenopus tropicalis</name>
    <name type="common">Western clawed frog</name>
    <name type="synonym">Silurana tropicalis</name>
    <dbReference type="NCBI Taxonomy" id="8364"/>
    <lineage>
        <taxon>Eukaryota</taxon>
        <taxon>Metazoa</taxon>
        <taxon>Chordata</taxon>
        <taxon>Craniata</taxon>
        <taxon>Vertebrata</taxon>
        <taxon>Euteleostomi</taxon>
        <taxon>Amphibia</taxon>
        <taxon>Batrachia</taxon>
        <taxon>Anura</taxon>
        <taxon>Pipoidea</taxon>
        <taxon>Pipidae</taxon>
        <taxon>Xenopodinae</taxon>
        <taxon>Xenopus</taxon>
        <taxon>Silurana</taxon>
    </lineage>
</organism>
<accession>Q0IHU9</accession>
<reference key="1">
    <citation type="submission" date="2006-09" db="EMBL/GenBank/DDBJ databases">
        <authorList>
            <consortium name="NIH - Xenopus Gene Collection (XGC) project"/>
        </authorList>
    </citation>
    <scope>NUCLEOTIDE SEQUENCE [LARGE SCALE MRNA]</scope>
    <source>
        <tissue>Brain</tissue>
    </source>
</reference>
<keyword id="KW-0053">Apoptosis</keyword>
<keyword id="KW-0963">Cytoplasm</keyword>
<keyword id="KW-1185">Reference proteome</keyword>
<evidence type="ECO:0000250" key="1"/>
<evidence type="ECO:0000255" key="2">
    <source>
        <dbReference type="PROSITE-ProRule" id="PRU00056"/>
    </source>
</evidence>
<evidence type="ECO:0000256" key="3">
    <source>
        <dbReference type="SAM" id="MobiDB-lite"/>
    </source>
</evidence>
<feature type="chain" id="PRO_0000274884" description="Protein prune homolog 2">
    <location>
        <begin position="1"/>
        <end position="316"/>
    </location>
</feature>
<feature type="domain" description="CRAL-TRIO" evidence="2">
    <location>
        <begin position="128"/>
        <end position="285"/>
    </location>
</feature>
<feature type="region of interest" description="Disordered" evidence="3">
    <location>
        <begin position="1"/>
        <end position="24"/>
    </location>
</feature>
<feature type="region of interest" description="Disordered" evidence="3">
    <location>
        <begin position="287"/>
        <end position="316"/>
    </location>
</feature>
<gene>
    <name type="primary">Prune2</name>
    <name type="synonym">Bmcc1</name>
</gene>
<proteinExistence type="evidence at transcript level"/>
<name>PRUN2_XENTR</name>
<protein>
    <recommendedName>
        <fullName>Protein prune homolog 2</fullName>
    </recommendedName>
    <alternativeName>
        <fullName>BNIP2 motif-containing molecule at the C-terminal region 1</fullName>
    </alternativeName>
</protein>
<dbReference type="EMBL" id="BC122960">
    <property type="protein sequence ID" value="AAI22961.1"/>
    <property type="molecule type" value="mRNA"/>
</dbReference>
<dbReference type="RefSeq" id="NP_001072592.1">
    <property type="nucleotide sequence ID" value="NM_001079124.1"/>
</dbReference>
<dbReference type="STRING" id="8364.ENSXETP00000004707"/>
<dbReference type="DNASU" id="780047"/>
<dbReference type="GeneID" id="780047"/>
<dbReference type="KEGG" id="xtr:780047"/>
<dbReference type="AGR" id="Xenbase:XB-GENE-989623"/>
<dbReference type="CTD" id="158471"/>
<dbReference type="Xenbase" id="XB-GENE-989623">
    <property type="gene designation" value="prune2"/>
</dbReference>
<dbReference type="InParanoid" id="Q0IHU9"/>
<dbReference type="OrthoDB" id="19923at2759"/>
<dbReference type="Proteomes" id="UP000008143">
    <property type="component" value="Chromosome 1"/>
</dbReference>
<dbReference type="GO" id="GO:0005737">
    <property type="term" value="C:cytoplasm"/>
    <property type="evidence" value="ECO:0007669"/>
    <property type="project" value="UniProtKB-SubCell"/>
</dbReference>
<dbReference type="GO" id="GO:0006915">
    <property type="term" value="P:apoptotic process"/>
    <property type="evidence" value="ECO:0007669"/>
    <property type="project" value="UniProtKB-KW"/>
</dbReference>
<dbReference type="CDD" id="cd00170">
    <property type="entry name" value="SEC14"/>
    <property type="match status" value="1"/>
</dbReference>
<dbReference type="FunFam" id="3.40.525.10:FF:000001">
    <property type="entry name" value="BCL2/adenovirus E1B protein-interacting protein 2"/>
    <property type="match status" value="1"/>
</dbReference>
<dbReference type="Gene3D" id="3.40.525.10">
    <property type="entry name" value="CRAL-TRIO lipid binding domain"/>
    <property type="match status" value="1"/>
</dbReference>
<dbReference type="InterPro" id="IPR022181">
    <property type="entry name" value="Bcl2-/adenovirus-E1B"/>
</dbReference>
<dbReference type="InterPro" id="IPR001251">
    <property type="entry name" value="CRAL-TRIO_dom"/>
</dbReference>
<dbReference type="InterPro" id="IPR036865">
    <property type="entry name" value="CRAL-TRIO_dom_sf"/>
</dbReference>
<dbReference type="PANTHER" id="PTHR12112">
    <property type="entry name" value="BNIP - RELATED"/>
    <property type="match status" value="1"/>
</dbReference>
<dbReference type="PANTHER" id="PTHR12112:SF11">
    <property type="entry name" value="PROTEIN PRUNE HOMOLOG 2"/>
    <property type="match status" value="1"/>
</dbReference>
<dbReference type="Pfam" id="PF12496">
    <property type="entry name" value="BNIP2"/>
    <property type="match status" value="1"/>
</dbReference>
<dbReference type="Pfam" id="PF13716">
    <property type="entry name" value="CRAL_TRIO_2"/>
    <property type="match status" value="1"/>
</dbReference>
<dbReference type="SMART" id="SM00516">
    <property type="entry name" value="SEC14"/>
    <property type="match status" value="1"/>
</dbReference>
<dbReference type="SUPFAM" id="SSF52087">
    <property type="entry name" value="CRAL/TRIO domain"/>
    <property type="match status" value="1"/>
</dbReference>
<dbReference type="PROSITE" id="PS50191">
    <property type="entry name" value="CRAL_TRIO"/>
    <property type="match status" value="1"/>
</dbReference>